<keyword id="KW-0010">Activator</keyword>
<keyword id="KW-0025">Alternative splicing</keyword>
<keyword id="KW-0238">DNA-binding</keyword>
<keyword id="KW-1017">Isopeptide bond</keyword>
<keyword id="KW-0539">Nucleus</keyword>
<keyword id="KW-0597">Phosphoprotein</keyword>
<keyword id="KW-1185">Reference proteome</keyword>
<keyword id="KW-0804">Transcription</keyword>
<keyword id="KW-0805">Transcription regulation</keyword>
<keyword id="KW-0832">Ubl conjugation</keyword>
<gene>
    <name type="primary">Etv4</name>
    <name type="synonym">Pea-3</name>
    <name type="synonym">Pea3</name>
</gene>
<name>ETV4_MOUSE</name>
<dbReference type="EMBL" id="X63190">
    <property type="protein sequence ID" value="CAA44872.1"/>
    <property type="molecule type" value="mRNA"/>
</dbReference>
<dbReference type="EMBL" id="AK144590">
    <property type="protein sequence ID" value="BAE25952.1"/>
    <property type="molecule type" value="mRNA"/>
</dbReference>
<dbReference type="EMBL" id="AL591436">
    <property type="status" value="NOT_ANNOTATED_CDS"/>
    <property type="molecule type" value="Genomic_DNA"/>
</dbReference>
<dbReference type="CCDS" id="CCDS48937.1">
    <molecule id="P28322-1"/>
</dbReference>
<dbReference type="PIR" id="S24061">
    <property type="entry name" value="S24061"/>
</dbReference>
<dbReference type="RefSeq" id="NP_032841.2">
    <molecule id="P28322-1"/>
    <property type="nucleotide sequence ID" value="NM_008815.3"/>
</dbReference>
<dbReference type="SMR" id="P28322"/>
<dbReference type="BioGRID" id="202104">
    <property type="interactions" value="3"/>
</dbReference>
<dbReference type="DIP" id="DIP-60466N"/>
<dbReference type="FunCoup" id="P28322">
    <property type="interactions" value="829"/>
</dbReference>
<dbReference type="IntAct" id="P28322">
    <property type="interactions" value="1"/>
</dbReference>
<dbReference type="STRING" id="10090.ENSMUSP00000017868"/>
<dbReference type="iPTMnet" id="P28322"/>
<dbReference type="PhosphoSitePlus" id="P28322"/>
<dbReference type="PaxDb" id="10090-ENSMUSP00000017868"/>
<dbReference type="ProteomicsDB" id="267664">
    <molecule id="P28322-1"/>
</dbReference>
<dbReference type="ProteomicsDB" id="267665">
    <molecule id="P28322-2"/>
</dbReference>
<dbReference type="Antibodypedia" id="890">
    <property type="antibodies" value="322 antibodies from 37 providers"/>
</dbReference>
<dbReference type="DNASU" id="18612"/>
<dbReference type="Ensembl" id="ENSMUST00000164750.8">
    <molecule id="P28322-1"/>
    <property type="protein sequence ID" value="ENSMUSP00000129261.2"/>
    <property type="gene ID" value="ENSMUSG00000017724.15"/>
</dbReference>
<dbReference type="GeneID" id="18612"/>
<dbReference type="KEGG" id="mmu:18612"/>
<dbReference type="UCSC" id="uc007lpt.1">
    <molecule id="P28322-1"/>
    <property type="organism name" value="mouse"/>
</dbReference>
<dbReference type="AGR" id="MGI:99423"/>
<dbReference type="CTD" id="2118"/>
<dbReference type="MGI" id="MGI:99423">
    <property type="gene designation" value="Etv4"/>
</dbReference>
<dbReference type="VEuPathDB" id="HostDB:ENSMUSG00000017724"/>
<dbReference type="eggNOG" id="KOG3806">
    <property type="taxonomic scope" value="Eukaryota"/>
</dbReference>
<dbReference type="GeneTree" id="ENSGT00940000158142"/>
<dbReference type="InParanoid" id="P28322"/>
<dbReference type="OrthoDB" id="10067219at2759"/>
<dbReference type="Reactome" id="R-MMU-5687128">
    <property type="pathway name" value="MAPK6/MAPK4 signaling"/>
</dbReference>
<dbReference type="BioGRID-ORCS" id="18612">
    <property type="hits" value="2 hits in 79 CRISPR screens"/>
</dbReference>
<dbReference type="ChiTaRS" id="Etv4">
    <property type="organism name" value="mouse"/>
</dbReference>
<dbReference type="PRO" id="PR:P28322"/>
<dbReference type="Proteomes" id="UP000000589">
    <property type="component" value="Chromosome 11"/>
</dbReference>
<dbReference type="RNAct" id="P28322">
    <property type="molecule type" value="protein"/>
</dbReference>
<dbReference type="Bgee" id="ENSMUSG00000017724">
    <property type="expression patterns" value="Expressed in secondary palate and 189 other cell types or tissues"/>
</dbReference>
<dbReference type="ExpressionAtlas" id="P28322">
    <property type="expression patterns" value="baseline and differential"/>
</dbReference>
<dbReference type="GO" id="GO:0005634">
    <property type="term" value="C:nucleus"/>
    <property type="evidence" value="ECO:0000314"/>
    <property type="project" value="MGI"/>
</dbReference>
<dbReference type="GO" id="GO:0003677">
    <property type="term" value="F:DNA binding"/>
    <property type="evidence" value="ECO:0000314"/>
    <property type="project" value="MGI"/>
</dbReference>
<dbReference type="GO" id="GO:0003700">
    <property type="term" value="F:DNA-binding transcription factor activity"/>
    <property type="evidence" value="ECO:0007669"/>
    <property type="project" value="InterPro"/>
</dbReference>
<dbReference type="GO" id="GO:0043565">
    <property type="term" value="F:sequence-specific DNA binding"/>
    <property type="evidence" value="ECO:0007669"/>
    <property type="project" value="InterPro"/>
</dbReference>
<dbReference type="GO" id="GO:0060444">
    <property type="term" value="P:branching involved in mammary gland duct morphogenesis"/>
    <property type="evidence" value="ECO:0000314"/>
    <property type="project" value="MGI"/>
</dbReference>
<dbReference type="GO" id="GO:0008045">
    <property type="term" value="P:motor neuron axon guidance"/>
    <property type="evidence" value="ECO:0000315"/>
    <property type="project" value="MGI"/>
</dbReference>
<dbReference type="GO" id="GO:0033600">
    <property type="term" value="P:negative regulation of mammary gland epithelial cell proliferation"/>
    <property type="evidence" value="ECO:0000315"/>
    <property type="project" value="MGI"/>
</dbReference>
<dbReference type="GO" id="GO:0045893">
    <property type="term" value="P:positive regulation of DNA-templated transcription"/>
    <property type="evidence" value="ECO:0000314"/>
    <property type="project" value="MGI"/>
</dbReference>
<dbReference type="GO" id="GO:0010628">
    <property type="term" value="P:positive regulation of gene expression"/>
    <property type="evidence" value="ECO:0000314"/>
    <property type="project" value="UniProtKB"/>
</dbReference>
<dbReference type="GO" id="GO:0045618">
    <property type="term" value="P:positive regulation of keratinocyte differentiation"/>
    <property type="evidence" value="ECO:0000250"/>
    <property type="project" value="UniProtKB"/>
</dbReference>
<dbReference type="GO" id="GO:0045944">
    <property type="term" value="P:positive regulation of transcription by RNA polymerase II"/>
    <property type="evidence" value="ECO:0000315"/>
    <property type="project" value="MGI"/>
</dbReference>
<dbReference type="GO" id="GO:0048863">
    <property type="term" value="P:stem cell differentiation"/>
    <property type="evidence" value="ECO:0000315"/>
    <property type="project" value="MGI"/>
</dbReference>
<dbReference type="GO" id="GO:0006366">
    <property type="term" value="P:transcription by RNA polymerase II"/>
    <property type="evidence" value="ECO:0000315"/>
    <property type="project" value="MGI"/>
</dbReference>
<dbReference type="FunFam" id="1.10.10.10:FF:000121">
    <property type="entry name" value="ETS translocation variant 5"/>
    <property type="match status" value="1"/>
</dbReference>
<dbReference type="Gene3D" id="1.10.10.10">
    <property type="entry name" value="Winged helix-like DNA-binding domain superfamily/Winged helix DNA-binding domain"/>
    <property type="match status" value="1"/>
</dbReference>
<dbReference type="InterPro" id="IPR000418">
    <property type="entry name" value="Ets_dom"/>
</dbReference>
<dbReference type="InterPro" id="IPR046328">
    <property type="entry name" value="ETS_fam"/>
</dbReference>
<dbReference type="InterPro" id="IPR006715">
    <property type="entry name" value="ETS_PEA3_N"/>
</dbReference>
<dbReference type="InterPro" id="IPR036388">
    <property type="entry name" value="WH-like_DNA-bd_sf"/>
</dbReference>
<dbReference type="InterPro" id="IPR036390">
    <property type="entry name" value="WH_DNA-bd_sf"/>
</dbReference>
<dbReference type="PANTHER" id="PTHR11849">
    <property type="entry name" value="ETS"/>
    <property type="match status" value="1"/>
</dbReference>
<dbReference type="PANTHER" id="PTHR11849:SF181">
    <property type="entry name" value="ETS TRANSLOCATION VARIANT 4"/>
    <property type="match status" value="1"/>
</dbReference>
<dbReference type="Pfam" id="PF00178">
    <property type="entry name" value="Ets"/>
    <property type="match status" value="1"/>
</dbReference>
<dbReference type="Pfam" id="PF04621">
    <property type="entry name" value="ETS_PEA3_N"/>
    <property type="match status" value="1"/>
</dbReference>
<dbReference type="PRINTS" id="PR00454">
    <property type="entry name" value="ETSDOMAIN"/>
</dbReference>
<dbReference type="SMART" id="SM00413">
    <property type="entry name" value="ETS"/>
    <property type="match status" value="1"/>
</dbReference>
<dbReference type="SUPFAM" id="SSF46785">
    <property type="entry name" value="Winged helix' DNA-binding domain"/>
    <property type="match status" value="1"/>
</dbReference>
<dbReference type="PROSITE" id="PS00345">
    <property type="entry name" value="ETS_DOMAIN_1"/>
    <property type="match status" value="1"/>
</dbReference>
<dbReference type="PROSITE" id="PS00346">
    <property type="entry name" value="ETS_DOMAIN_2"/>
    <property type="match status" value="1"/>
</dbReference>
<dbReference type="PROSITE" id="PS50061">
    <property type="entry name" value="ETS_DOMAIN_3"/>
    <property type="match status" value="1"/>
</dbReference>
<protein>
    <recommendedName>
        <fullName>ETS translocation variant 4</fullName>
    </recommendedName>
    <alternativeName>
        <fullName>Polyomavirus enhancer activator 3</fullName>
        <shortName>Protein PEA3</shortName>
    </alternativeName>
</protein>
<reference key="1">
    <citation type="journal article" date="1992" name="Genes Dev.">
        <title>Molecular cloning and characterization of PEA3, a new member of the Ets oncogene family that is differentially expressed in mouse embryonic cells.</title>
        <authorList>
            <person name="Xin J.-H."/>
            <person name="Cowie A."/>
            <person name="Lachance P."/>
            <person name="Hassell J.A."/>
        </authorList>
    </citation>
    <scope>NUCLEOTIDE SEQUENCE [MRNA] (ISOFORM 2)</scope>
    <scope>FUNCTION</scope>
    <scope>TISSUE SPECIFICITY</scope>
</reference>
<reference key="2">
    <citation type="journal article" date="2005" name="Science">
        <title>The transcriptional landscape of the mammalian genome.</title>
        <authorList>
            <person name="Carninci P."/>
            <person name="Kasukawa T."/>
            <person name="Katayama S."/>
            <person name="Gough J."/>
            <person name="Frith M.C."/>
            <person name="Maeda N."/>
            <person name="Oyama R."/>
            <person name="Ravasi T."/>
            <person name="Lenhard B."/>
            <person name="Wells C."/>
            <person name="Kodzius R."/>
            <person name="Shimokawa K."/>
            <person name="Bajic V.B."/>
            <person name="Brenner S.E."/>
            <person name="Batalov S."/>
            <person name="Forrest A.R."/>
            <person name="Zavolan M."/>
            <person name="Davis M.J."/>
            <person name="Wilming L.G."/>
            <person name="Aidinis V."/>
            <person name="Allen J.E."/>
            <person name="Ambesi-Impiombato A."/>
            <person name="Apweiler R."/>
            <person name="Aturaliya R.N."/>
            <person name="Bailey T.L."/>
            <person name="Bansal M."/>
            <person name="Baxter L."/>
            <person name="Beisel K.W."/>
            <person name="Bersano T."/>
            <person name="Bono H."/>
            <person name="Chalk A.M."/>
            <person name="Chiu K.P."/>
            <person name="Choudhary V."/>
            <person name="Christoffels A."/>
            <person name="Clutterbuck D.R."/>
            <person name="Crowe M.L."/>
            <person name="Dalla E."/>
            <person name="Dalrymple B.P."/>
            <person name="de Bono B."/>
            <person name="Della Gatta G."/>
            <person name="di Bernardo D."/>
            <person name="Down T."/>
            <person name="Engstrom P."/>
            <person name="Fagiolini M."/>
            <person name="Faulkner G."/>
            <person name="Fletcher C.F."/>
            <person name="Fukushima T."/>
            <person name="Furuno M."/>
            <person name="Futaki S."/>
            <person name="Gariboldi M."/>
            <person name="Georgii-Hemming P."/>
            <person name="Gingeras T.R."/>
            <person name="Gojobori T."/>
            <person name="Green R.E."/>
            <person name="Gustincich S."/>
            <person name="Harbers M."/>
            <person name="Hayashi Y."/>
            <person name="Hensch T.K."/>
            <person name="Hirokawa N."/>
            <person name="Hill D."/>
            <person name="Huminiecki L."/>
            <person name="Iacono M."/>
            <person name="Ikeo K."/>
            <person name="Iwama A."/>
            <person name="Ishikawa T."/>
            <person name="Jakt M."/>
            <person name="Kanapin A."/>
            <person name="Katoh M."/>
            <person name="Kawasawa Y."/>
            <person name="Kelso J."/>
            <person name="Kitamura H."/>
            <person name="Kitano H."/>
            <person name="Kollias G."/>
            <person name="Krishnan S.P."/>
            <person name="Kruger A."/>
            <person name="Kummerfeld S.K."/>
            <person name="Kurochkin I.V."/>
            <person name="Lareau L.F."/>
            <person name="Lazarevic D."/>
            <person name="Lipovich L."/>
            <person name="Liu J."/>
            <person name="Liuni S."/>
            <person name="McWilliam S."/>
            <person name="Madan Babu M."/>
            <person name="Madera M."/>
            <person name="Marchionni L."/>
            <person name="Matsuda H."/>
            <person name="Matsuzawa S."/>
            <person name="Miki H."/>
            <person name="Mignone F."/>
            <person name="Miyake S."/>
            <person name="Morris K."/>
            <person name="Mottagui-Tabar S."/>
            <person name="Mulder N."/>
            <person name="Nakano N."/>
            <person name="Nakauchi H."/>
            <person name="Ng P."/>
            <person name="Nilsson R."/>
            <person name="Nishiguchi S."/>
            <person name="Nishikawa S."/>
            <person name="Nori F."/>
            <person name="Ohara O."/>
            <person name="Okazaki Y."/>
            <person name="Orlando V."/>
            <person name="Pang K.C."/>
            <person name="Pavan W.J."/>
            <person name="Pavesi G."/>
            <person name="Pesole G."/>
            <person name="Petrovsky N."/>
            <person name="Piazza S."/>
            <person name="Reed J."/>
            <person name="Reid J.F."/>
            <person name="Ring B.Z."/>
            <person name="Ringwald M."/>
            <person name="Rost B."/>
            <person name="Ruan Y."/>
            <person name="Salzberg S.L."/>
            <person name="Sandelin A."/>
            <person name="Schneider C."/>
            <person name="Schoenbach C."/>
            <person name="Sekiguchi K."/>
            <person name="Semple C.A."/>
            <person name="Seno S."/>
            <person name="Sessa L."/>
            <person name="Sheng Y."/>
            <person name="Shibata Y."/>
            <person name="Shimada H."/>
            <person name="Shimada K."/>
            <person name="Silva D."/>
            <person name="Sinclair B."/>
            <person name="Sperling S."/>
            <person name="Stupka E."/>
            <person name="Sugiura K."/>
            <person name="Sultana R."/>
            <person name="Takenaka Y."/>
            <person name="Taki K."/>
            <person name="Tammoja K."/>
            <person name="Tan S.L."/>
            <person name="Tang S."/>
            <person name="Taylor M.S."/>
            <person name="Tegner J."/>
            <person name="Teichmann S.A."/>
            <person name="Ueda H.R."/>
            <person name="van Nimwegen E."/>
            <person name="Verardo R."/>
            <person name="Wei C.L."/>
            <person name="Yagi K."/>
            <person name="Yamanishi H."/>
            <person name="Zabarovsky E."/>
            <person name="Zhu S."/>
            <person name="Zimmer A."/>
            <person name="Hide W."/>
            <person name="Bult C."/>
            <person name="Grimmond S.M."/>
            <person name="Teasdale R.D."/>
            <person name="Liu E.T."/>
            <person name="Brusic V."/>
            <person name="Quackenbush J."/>
            <person name="Wahlestedt C."/>
            <person name="Mattick J.S."/>
            <person name="Hume D.A."/>
            <person name="Kai C."/>
            <person name="Sasaki D."/>
            <person name="Tomaru Y."/>
            <person name="Fukuda S."/>
            <person name="Kanamori-Katayama M."/>
            <person name="Suzuki M."/>
            <person name="Aoki J."/>
            <person name="Arakawa T."/>
            <person name="Iida J."/>
            <person name="Imamura K."/>
            <person name="Itoh M."/>
            <person name="Kato T."/>
            <person name="Kawaji H."/>
            <person name="Kawagashira N."/>
            <person name="Kawashima T."/>
            <person name="Kojima M."/>
            <person name="Kondo S."/>
            <person name="Konno H."/>
            <person name="Nakano K."/>
            <person name="Ninomiya N."/>
            <person name="Nishio T."/>
            <person name="Okada M."/>
            <person name="Plessy C."/>
            <person name="Shibata K."/>
            <person name="Shiraki T."/>
            <person name="Suzuki S."/>
            <person name="Tagami M."/>
            <person name="Waki K."/>
            <person name="Watahiki A."/>
            <person name="Okamura-Oho Y."/>
            <person name="Suzuki H."/>
            <person name="Kawai J."/>
            <person name="Hayashizaki Y."/>
        </authorList>
    </citation>
    <scope>NUCLEOTIDE SEQUENCE [LARGE SCALE MRNA] (ISOFORM 1)</scope>
    <source>
        <tissue>Lung</tissue>
    </source>
</reference>
<reference key="3">
    <citation type="journal article" date="2009" name="PLoS Biol.">
        <title>Lineage-specific biology revealed by a finished genome assembly of the mouse.</title>
        <authorList>
            <person name="Church D.M."/>
            <person name="Goodstadt L."/>
            <person name="Hillier L.W."/>
            <person name="Zody M.C."/>
            <person name="Goldstein S."/>
            <person name="She X."/>
            <person name="Bult C.J."/>
            <person name="Agarwala R."/>
            <person name="Cherry J.L."/>
            <person name="DiCuccio M."/>
            <person name="Hlavina W."/>
            <person name="Kapustin Y."/>
            <person name="Meric P."/>
            <person name="Maglott D."/>
            <person name="Birtle Z."/>
            <person name="Marques A.C."/>
            <person name="Graves T."/>
            <person name="Zhou S."/>
            <person name="Teague B."/>
            <person name="Potamousis K."/>
            <person name="Churas C."/>
            <person name="Place M."/>
            <person name="Herschleb J."/>
            <person name="Runnheim R."/>
            <person name="Forrest D."/>
            <person name="Amos-Landgraf J."/>
            <person name="Schwartz D.C."/>
            <person name="Cheng Z."/>
            <person name="Lindblad-Toh K."/>
            <person name="Eichler E.E."/>
            <person name="Ponting C.P."/>
        </authorList>
    </citation>
    <scope>NUCLEOTIDE SEQUENCE [LARGE SCALE GENOMIC DNA]</scope>
    <source>
        <strain>C57BL/6J</strain>
    </source>
</reference>
<evidence type="ECO:0000250" key="1"/>
<evidence type="ECO:0000250" key="2">
    <source>
        <dbReference type="UniProtKB" id="P43268"/>
    </source>
</evidence>
<evidence type="ECO:0000250" key="3">
    <source>
        <dbReference type="UniProtKB" id="P50549"/>
    </source>
</evidence>
<evidence type="ECO:0000255" key="4">
    <source>
        <dbReference type="PROSITE-ProRule" id="PRU00237"/>
    </source>
</evidence>
<evidence type="ECO:0000256" key="5">
    <source>
        <dbReference type="SAM" id="MobiDB-lite"/>
    </source>
</evidence>
<evidence type="ECO:0000269" key="6">
    <source>
    </source>
</evidence>
<evidence type="ECO:0000303" key="7">
    <source>
    </source>
</evidence>
<evidence type="ECO:0000305" key="8"/>
<proteinExistence type="evidence at transcript level"/>
<organism>
    <name type="scientific">Mus musculus</name>
    <name type="common">Mouse</name>
    <dbReference type="NCBI Taxonomy" id="10090"/>
    <lineage>
        <taxon>Eukaryota</taxon>
        <taxon>Metazoa</taxon>
        <taxon>Chordata</taxon>
        <taxon>Craniata</taxon>
        <taxon>Vertebrata</taxon>
        <taxon>Euteleostomi</taxon>
        <taxon>Mammalia</taxon>
        <taxon>Eutheria</taxon>
        <taxon>Euarchontoglires</taxon>
        <taxon>Glires</taxon>
        <taxon>Rodentia</taxon>
        <taxon>Myomorpha</taxon>
        <taxon>Muroidea</taxon>
        <taxon>Muridae</taxon>
        <taxon>Murinae</taxon>
        <taxon>Mus</taxon>
        <taxon>Mus</taxon>
    </lineage>
</organism>
<accession>P28322</accession>
<accession>Q3UMZ6</accession>
<comment type="function">
    <text evidence="2 6">Transcriptional activator (PubMed:1547944). May play a role in keratinocyte differentiation (By similarity).</text>
</comment>
<comment type="subcellular location">
    <subcellularLocation>
        <location evidence="4">Nucleus</location>
    </subcellularLocation>
</comment>
<comment type="alternative products">
    <event type="alternative splicing"/>
    <isoform>
        <id>P28322-1</id>
        <name>1</name>
        <sequence type="displayed"/>
    </isoform>
    <isoform>
        <id>P28322-2</id>
        <name>2</name>
        <sequence type="described" ref="VSP_047943 VSP_047944 VSP_047945"/>
    </isoform>
</comment>
<comment type="tissue specificity">
    <text evidence="6">Epididymis and brain.</text>
</comment>
<comment type="PTM">
    <text evidence="2">Sumoylated; enhanced upon ERK/MAP kinase pathway activation it positively regulates the transcriptional activator capacity. Sumoylation at Lys-95 probably requires phosphorylation at Ser-100. Transiently polysumoylated and desumoylated by SENP1. Sumoylation is a prerequisite to polyubiquitination which in turn increases proteasomal-mediated degradation. Probably polyubiquitinated by RNF4 and deubiquitinated by USP2.</text>
</comment>
<comment type="similarity">
    <text evidence="8">Belongs to the ETS family.</text>
</comment>
<sequence>MERRMKGGYLDQRVPYTFCSKSPGNGSLGEALMVPQGKLMDPGSLPPSDSEDLFQDLSHFQETWLAEAQVPDSDEQFVPDFHSENSFHSPTTRIKKEPQSPRTDPALSCSRKPPLPYHHGEQCLYSSAYDSPRQIAIKSPAPGAPGQSPLQPFSRAEQQQSLLRASSSSQSHPGHGYLGEHSSVFQQPVDMCHSFTSPQGGGREPLPAPYQHQLSEPCPPYPQQNFKQEYHDPLYEQAGQPASSQGGVSGHRYPGAGVVIKQERTDFAYDSDVPGCASMYLHPEGFSGPSPGDGVMGYGYEKSLRPFPDDVCIVPEKFEGDIKQEGIGAFREGPPYQRRGALQLWQFLVALLDDPTNAHFIAWTGRGMEFKLIEPEEVARLWGIQKNRPAMNYDKLSRSLRYYYEKGIMQKVAGERYVYKFVCEPEALFSLAFPDNQRPALKAEFDRPVSEEDTVPLSHLDESPAYLPELTGPAPPFGHRGGYSY</sequence>
<feature type="chain" id="PRO_0000204117" description="ETS translocation variant 4">
    <location>
        <begin position="1"/>
        <end position="485"/>
    </location>
</feature>
<feature type="DNA-binding region" description="ETS" evidence="4">
    <location>
        <begin position="342"/>
        <end position="422"/>
    </location>
</feature>
<feature type="region of interest" description="Disordered" evidence="5">
    <location>
        <begin position="79"/>
        <end position="114"/>
    </location>
</feature>
<feature type="region of interest" description="Disordered" evidence="5">
    <location>
        <begin position="135"/>
        <end position="214"/>
    </location>
</feature>
<feature type="compositionally biased region" description="Low complexity" evidence="5">
    <location>
        <begin position="158"/>
        <end position="171"/>
    </location>
</feature>
<feature type="modified residue" description="Phosphoserine" evidence="2">
    <location>
        <position position="100"/>
    </location>
</feature>
<feature type="modified residue" description="Phosphoserine" evidence="2">
    <location>
        <position position="139"/>
    </location>
</feature>
<feature type="modified residue" description="Phosphoserine" evidence="2">
    <location>
        <position position="148"/>
    </location>
</feature>
<feature type="modified residue" description="Phosphoserine" evidence="3">
    <location>
        <position position="215"/>
    </location>
</feature>
<feature type="cross-link" description="Glycyl lysine isopeptide (Lys-Gly) (interchain with G-Cter in SUMO2)" evidence="2">
    <location>
        <position position="6"/>
    </location>
</feature>
<feature type="cross-link" description="Glycyl lysine isopeptide (Lys-Gly) (interchain with G-Cter in SUMO)" evidence="1">
    <location>
        <position position="95"/>
    </location>
</feature>
<feature type="cross-link" description="Glycyl lysine isopeptide (Lys-Gly) (interchain with G-Cter in SUMO2)" evidence="2">
    <location>
        <position position="138"/>
    </location>
</feature>
<feature type="cross-link" description="Glycyl lysine isopeptide (Lys-Gly) (interchain with G-Cter in SUMO)" evidence="1">
    <location>
        <position position="227"/>
    </location>
</feature>
<feature type="cross-link" description="Glycyl lysine isopeptide (Lys-Gly) (interchain with G-Cter in SUMO)" evidence="1">
    <location>
        <position position="261"/>
    </location>
</feature>
<feature type="cross-link" description="Glycyl lysine isopeptide (Lys-Gly) (interchain with G-Cter in SUMO2)" evidence="2">
    <location>
        <position position="323"/>
    </location>
</feature>
<feature type="splice variant" id="VSP_047943" description="In isoform 2." evidence="7">
    <original>M</original>
    <variation>MTKSSNHNCLLRPENKPGLWGPGAQAASLRPSPATLVVSSPGHAEHPPAAPAQTPGPQVSASARGPGPVAGGSGRM</variation>
    <location>
        <position position="1"/>
    </location>
</feature>
<feature type="splice variant" id="VSP_047944" description="In isoform 2." evidence="7">
    <original>S</original>
    <variation>LA</variation>
    <location>
        <position position="86"/>
    </location>
</feature>
<feature type="splice variant" id="VSP_047945" description="In isoform 2." evidence="7">
    <location>
        <begin position="127"/>
        <end position="132"/>
    </location>
</feature>
<feature type="sequence conflict" description="In Ref. 1; CAA44872." evidence="8" ref="1">
    <original>E</original>
    <variation>K</variation>
    <location>
        <position position="316"/>
    </location>
</feature>